<accession>P65516</accession>
<accession>Q99WQ8</accession>
<organism>
    <name type="scientific">Staphylococcus aureus (strain Mu50 / ATCC 700699)</name>
    <dbReference type="NCBI Taxonomy" id="158878"/>
    <lineage>
        <taxon>Bacteria</taxon>
        <taxon>Bacillati</taxon>
        <taxon>Bacillota</taxon>
        <taxon>Bacilli</taxon>
        <taxon>Bacillales</taxon>
        <taxon>Staphylococcaceae</taxon>
        <taxon>Staphylococcus</taxon>
    </lineage>
</organism>
<protein>
    <recommendedName>
        <fullName evidence="1">Putative N-acetylmannosamine-6-phosphate 2-epimerase</fullName>
        <ecNumber evidence="1">5.1.3.9</ecNumber>
    </recommendedName>
    <alternativeName>
        <fullName evidence="1">ManNAc-6-P epimerase</fullName>
    </alternativeName>
</protein>
<evidence type="ECO:0000255" key="1">
    <source>
        <dbReference type="HAMAP-Rule" id="MF_01235"/>
    </source>
</evidence>
<reference key="1">
    <citation type="journal article" date="2001" name="Lancet">
        <title>Whole genome sequencing of meticillin-resistant Staphylococcus aureus.</title>
        <authorList>
            <person name="Kuroda M."/>
            <person name="Ohta T."/>
            <person name="Uchiyama I."/>
            <person name="Baba T."/>
            <person name="Yuzawa H."/>
            <person name="Kobayashi I."/>
            <person name="Cui L."/>
            <person name="Oguchi A."/>
            <person name="Aoki K."/>
            <person name="Nagai Y."/>
            <person name="Lian J.-Q."/>
            <person name="Ito T."/>
            <person name="Kanamori M."/>
            <person name="Matsumaru H."/>
            <person name="Maruyama A."/>
            <person name="Murakami H."/>
            <person name="Hosoyama A."/>
            <person name="Mizutani-Ui Y."/>
            <person name="Takahashi N.K."/>
            <person name="Sawano T."/>
            <person name="Inoue R."/>
            <person name="Kaito C."/>
            <person name="Sekimizu K."/>
            <person name="Hirakawa H."/>
            <person name="Kuhara S."/>
            <person name="Goto S."/>
            <person name="Yabuzaki J."/>
            <person name="Kanehisa M."/>
            <person name="Yamashita A."/>
            <person name="Oshima K."/>
            <person name="Furuya K."/>
            <person name="Yoshino C."/>
            <person name="Shiba T."/>
            <person name="Hattori M."/>
            <person name="Ogasawara N."/>
            <person name="Hayashi H."/>
            <person name="Hiramatsu K."/>
        </authorList>
    </citation>
    <scope>NUCLEOTIDE SEQUENCE [LARGE SCALE GENOMIC DNA]</scope>
    <source>
        <strain>Mu50 / ATCC 700699</strain>
    </source>
</reference>
<sequence length="222" mass="24505">MLPHGLIVSCQALADEPLHSSFIMSKMALAAYEGGAVGIRANTKEDILAIKETVDLPVIGIVKRDYDHSDVFITATSKEVDELIESQCEVIALDATLQQRPKETLDELVSYIRTHAPNVEIMADIATVEEAKNAARLGFDYIGTTLHGYTSYTQGQLLYQNDFQFLKDVLQSVDAKVIAEGNVITPDMYKRVMDLGVHCSVVGGAITRPKEITKRFVQVMED</sequence>
<dbReference type="EC" id="5.1.3.9" evidence="1"/>
<dbReference type="EMBL" id="BA000017">
    <property type="protein sequence ID" value="BAB56480.1"/>
    <property type="molecule type" value="Genomic_DNA"/>
</dbReference>
<dbReference type="RefSeq" id="WP_000936718.1">
    <property type="nucleotide sequence ID" value="NC_002758.2"/>
</dbReference>
<dbReference type="SMR" id="P65516"/>
<dbReference type="KEGG" id="sav:SAV0318"/>
<dbReference type="HOGENOM" id="CLU_086300_1_0_9"/>
<dbReference type="PhylomeDB" id="P65516"/>
<dbReference type="UniPathway" id="UPA00629">
    <property type="reaction ID" value="UER00682"/>
</dbReference>
<dbReference type="Proteomes" id="UP000002481">
    <property type="component" value="Chromosome"/>
</dbReference>
<dbReference type="GO" id="GO:0005829">
    <property type="term" value="C:cytosol"/>
    <property type="evidence" value="ECO:0007669"/>
    <property type="project" value="TreeGrafter"/>
</dbReference>
<dbReference type="GO" id="GO:0047465">
    <property type="term" value="F:N-acylglucosamine-6-phosphate 2-epimerase activity"/>
    <property type="evidence" value="ECO:0007669"/>
    <property type="project" value="UniProtKB-EC"/>
</dbReference>
<dbReference type="GO" id="GO:0005975">
    <property type="term" value="P:carbohydrate metabolic process"/>
    <property type="evidence" value="ECO:0007669"/>
    <property type="project" value="UniProtKB-UniRule"/>
</dbReference>
<dbReference type="GO" id="GO:0006053">
    <property type="term" value="P:N-acetylmannosamine catabolic process"/>
    <property type="evidence" value="ECO:0007669"/>
    <property type="project" value="TreeGrafter"/>
</dbReference>
<dbReference type="GO" id="GO:0019262">
    <property type="term" value="P:N-acetylneuraminate catabolic process"/>
    <property type="evidence" value="ECO:0007669"/>
    <property type="project" value="UniProtKB-UniRule"/>
</dbReference>
<dbReference type="CDD" id="cd04729">
    <property type="entry name" value="NanE"/>
    <property type="match status" value="1"/>
</dbReference>
<dbReference type="FunFam" id="3.20.20.70:FF:000035">
    <property type="entry name" value="Putative N-acetylmannosamine-6-phosphate 2-epimerase"/>
    <property type="match status" value="1"/>
</dbReference>
<dbReference type="Gene3D" id="3.20.20.70">
    <property type="entry name" value="Aldolase class I"/>
    <property type="match status" value="1"/>
</dbReference>
<dbReference type="HAMAP" id="MF_01235">
    <property type="entry name" value="ManNAc6P_epimer"/>
    <property type="match status" value="1"/>
</dbReference>
<dbReference type="InterPro" id="IPR013785">
    <property type="entry name" value="Aldolase_TIM"/>
</dbReference>
<dbReference type="InterPro" id="IPR007260">
    <property type="entry name" value="NanE"/>
</dbReference>
<dbReference type="InterPro" id="IPR011060">
    <property type="entry name" value="RibuloseP-bd_barrel"/>
</dbReference>
<dbReference type="NCBIfam" id="NF002231">
    <property type="entry name" value="PRK01130.1"/>
    <property type="match status" value="1"/>
</dbReference>
<dbReference type="PANTHER" id="PTHR36204">
    <property type="entry name" value="N-ACETYLMANNOSAMINE-6-PHOSPHATE 2-EPIMERASE-RELATED"/>
    <property type="match status" value="1"/>
</dbReference>
<dbReference type="PANTHER" id="PTHR36204:SF1">
    <property type="entry name" value="N-ACETYLMANNOSAMINE-6-PHOSPHATE 2-EPIMERASE-RELATED"/>
    <property type="match status" value="1"/>
</dbReference>
<dbReference type="Pfam" id="PF04131">
    <property type="entry name" value="NanE"/>
    <property type="match status" value="1"/>
</dbReference>
<dbReference type="SUPFAM" id="SSF51366">
    <property type="entry name" value="Ribulose-phoshate binding barrel"/>
    <property type="match status" value="1"/>
</dbReference>
<keyword id="KW-0119">Carbohydrate metabolism</keyword>
<keyword id="KW-0413">Isomerase</keyword>
<comment type="function">
    <text evidence="1">Converts N-acetylmannosamine-6-phosphate (ManNAc-6-P) to N-acetylglucosamine-6-phosphate (GlcNAc-6-P).</text>
</comment>
<comment type="catalytic activity">
    <reaction evidence="1">
        <text>an N-acyl-D-glucosamine 6-phosphate = an N-acyl-D-mannosamine 6-phosphate</text>
        <dbReference type="Rhea" id="RHEA:23932"/>
        <dbReference type="ChEBI" id="CHEBI:57599"/>
        <dbReference type="ChEBI" id="CHEBI:57666"/>
        <dbReference type="EC" id="5.1.3.9"/>
    </reaction>
</comment>
<comment type="pathway">
    <text evidence="1">Amino-sugar metabolism; N-acetylneuraminate degradation; D-fructose 6-phosphate from N-acetylneuraminate: step 3/5.</text>
</comment>
<comment type="similarity">
    <text evidence="1">Belongs to the NanE family.</text>
</comment>
<proteinExistence type="inferred from homology"/>
<name>NANE_STAAM</name>
<feature type="chain" id="PRO_0000179798" description="Putative N-acetylmannosamine-6-phosphate 2-epimerase">
    <location>
        <begin position="1"/>
        <end position="222"/>
    </location>
</feature>
<gene>
    <name evidence="1" type="primary">nanE</name>
    <name type="ordered locus">SAV0318</name>
</gene>